<feature type="chain" id="PRO_0000418624" description="E3 ubiquitin-protein ligase RNF170">
    <location>
        <begin position="1"/>
        <end position="259"/>
    </location>
</feature>
<feature type="topological domain" description="Lumenal" evidence="2">
    <location>
        <begin position="1"/>
        <end position="25"/>
    </location>
</feature>
<feature type="transmembrane region" description="Helical" evidence="2">
    <location>
        <begin position="26"/>
        <end position="46"/>
    </location>
</feature>
<feature type="topological domain" description="Cytoplasmic" evidence="2">
    <location>
        <begin position="47"/>
        <end position="202"/>
    </location>
</feature>
<feature type="transmembrane region" description="Helical" evidence="2">
    <location>
        <begin position="203"/>
        <end position="223"/>
    </location>
</feature>
<feature type="topological domain" description="Lumenal" evidence="2">
    <location>
        <position position="224"/>
    </location>
</feature>
<feature type="transmembrane region" description="Helical" evidence="2">
    <location>
        <begin position="225"/>
        <end position="245"/>
    </location>
</feature>
<feature type="topological domain" description="Cytoplasmic" evidence="2">
    <location>
        <begin position="246"/>
        <end position="259"/>
    </location>
</feature>
<feature type="zinc finger region" description="RING-type" evidence="3">
    <location>
        <begin position="88"/>
        <end position="131"/>
    </location>
</feature>
<accession>F1MK05</accession>
<dbReference type="EC" id="2.3.2.27"/>
<dbReference type="EMBL" id="DAAA02060959">
    <property type="status" value="NOT_ANNOTATED_CDS"/>
    <property type="molecule type" value="Genomic_DNA"/>
</dbReference>
<dbReference type="SMR" id="F1MK05"/>
<dbReference type="FunCoup" id="F1MK05">
    <property type="interactions" value="889"/>
</dbReference>
<dbReference type="STRING" id="9913.ENSBTAP00000072624"/>
<dbReference type="PaxDb" id="9913-ENSBTAP00000044412"/>
<dbReference type="eggNOG" id="KOG2164">
    <property type="taxonomic scope" value="Eukaryota"/>
</dbReference>
<dbReference type="HOGENOM" id="CLU_072335_0_0_1"/>
<dbReference type="InParanoid" id="F1MK05"/>
<dbReference type="OrthoDB" id="9049620at2759"/>
<dbReference type="TreeFam" id="TF328342"/>
<dbReference type="UniPathway" id="UPA00143"/>
<dbReference type="Proteomes" id="UP000009136">
    <property type="component" value="Unplaced"/>
</dbReference>
<dbReference type="GO" id="GO:0005789">
    <property type="term" value="C:endoplasmic reticulum membrane"/>
    <property type="evidence" value="ECO:0007669"/>
    <property type="project" value="UniProtKB-SubCell"/>
</dbReference>
<dbReference type="GO" id="GO:0061630">
    <property type="term" value="F:ubiquitin protein ligase activity"/>
    <property type="evidence" value="ECO:0007669"/>
    <property type="project" value="InterPro"/>
</dbReference>
<dbReference type="GO" id="GO:0008270">
    <property type="term" value="F:zinc ion binding"/>
    <property type="evidence" value="ECO:0007669"/>
    <property type="project" value="UniProtKB-KW"/>
</dbReference>
<dbReference type="GO" id="GO:0016567">
    <property type="term" value="P:protein ubiquitination"/>
    <property type="evidence" value="ECO:0007669"/>
    <property type="project" value="UniProtKB-UniPathway"/>
</dbReference>
<dbReference type="CDD" id="cd16553">
    <property type="entry name" value="RING-HC_RNF170"/>
    <property type="match status" value="1"/>
</dbReference>
<dbReference type="Gene3D" id="3.30.40.10">
    <property type="entry name" value="Zinc/RING finger domain, C3HC4 (zinc finger)"/>
    <property type="match status" value="1"/>
</dbReference>
<dbReference type="InterPro" id="IPR010652">
    <property type="entry name" value="DUF1232"/>
</dbReference>
<dbReference type="InterPro" id="IPR038896">
    <property type="entry name" value="RNF170"/>
</dbReference>
<dbReference type="InterPro" id="IPR027370">
    <property type="entry name" value="Znf-RING_euk"/>
</dbReference>
<dbReference type="InterPro" id="IPR001841">
    <property type="entry name" value="Znf_RING"/>
</dbReference>
<dbReference type="InterPro" id="IPR013083">
    <property type="entry name" value="Znf_RING/FYVE/PHD"/>
</dbReference>
<dbReference type="InterPro" id="IPR017907">
    <property type="entry name" value="Znf_RING_CS"/>
</dbReference>
<dbReference type="PANTHER" id="PTHR22894:SF1">
    <property type="entry name" value="E3 UBIQUITIN-PROTEIN LIGASE RNF170"/>
    <property type="match status" value="1"/>
</dbReference>
<dbReference type="PANTHER" id="PTHR22894">
    <property type="entry name" value="RING-TYPE DOMAIN-CONTAINING PROTEIN"/>
    <property type="match status" value="1"/>
</dbReference>
<dbReference type="Pfam" id="PF06803">
    <property type="entry name" value="DUF1232"/>
    <property type="match status" value="1"/>
</dbReference>
<dbReference type="Pfam" id="PF13445">
    <property type="entry name" value="zf-RING_UBOX"/>
    <property type="match status" value="1"/>
</dbReference>
<dbReference type="SMART" id="SM00184">
    <property type="entry name" value="RING"/>
    <property type="match status" value="1"/>
</dbReference>
<dbReference type="SUPFAM" id="SSF57850">
    <property type="entry name" value="RING/U-box"/>
    <property type="match status" value="1"/>
</dbReference>
<dbReference type="PROSITE" id="PS00518">
    <property type="entry name" value="ZF_RING_1"/>
    <property type="match status" value="1"/>
</dbReference>
<dbReference type="PROSITE" id="PS50089">
    <property type="entry name" value="ZF_RING_2"/>
    <property type="match status" value="1"/>
</dbReference>
<organism>
    <name type="scientific">Bos taurus</name>
    <name type="common">Bovine</name>
    <dbReference type="NCBI Taxonomy" id="9913"/>
    <lineage>
        <taxon>Eukaryota</taxon>
        <taxon>Metazoa</taxon>
        <taxon>Chordata</taxon>
        <taxon>Craniata</taxon>
        <taxon>Vertebrata</taxon>
        <taxon>Euteleostomi</taxon>
        <taxon>Mammalia</taxon>
        <taxon>Eutheria</taxon>
        <taxon>Laurasiatheria</taxon>
        <taxon>Artiodactyla</taxon>
        <taxon>Ruminantia</taxon>
        <taxon>Pecora</taxon>
        <taxon>Bovidae</taxon>
        <taxon>Bovinae</taxon>
        <taxon>Bos</taxon>
    </lineage>
</organism>
<comment type="function">
    <text evidence="1">E3 ubiquitin-protein ligase. Plays an essential role in stimulus-induced inositol 1,4,5-trisphosphate receptor type 1 (ITPR1) ubiquitination and degradation via the endoplasmic reticulum-associated degradation (ERAD) pathway. Also involved in ITPR1 turnover in resting cells. Selectively inhibits the TLR3-triggered innate immune response by promoting the 'Lys-48'-linked polyubiquitination and degradation of TLR3.</text>
</comment>
<comment type="catalytic activity">
    <reaction>
        <text>S-ubiquitinyl-[E2 ubiquitin-conjugating enzyme]-L-cysteine + [acceptor protein]-L-lysine = [E2 ubiquitin-conjugating enzyme]-L-cysteine + N(6)-ubiquitinyl-[acceptor protein]-L-lysine.</text>
        <dbReference type="EC" id="2.3.2.27"/>
    </reaction>
</comment>
<comment type="pathway">
    <text>Protein modification; protein ubiquitination.</text>
</comment>
<comment type="subunit">
    <text evidence="1">Constitutively associated with the ERLIN1/ERLIN 2 complex. Interacts with activated ITPR1.</text>
</comment>
<comment type="subcellular location">
    <subcellularLocation>
        <location evidence="1">Endoplasmic reticulum membrane</location>
        <topology evidence="1">Multi-pass membrane protein</topology>
    </subcellularLocation>
</comment>
<name>RN170_BOVIN</name>
<reference key="1">
    <citation type="journal article" date="2009" name="Genome Biol.">
        <title>A whole-genome assembly of the domestic cow, Bos taurus.</title>
        <authorList>
            <person name="Zimin A.V."/>
            <person name="Delcher A.L."/>
            <person name="Florea L."/>
            <person name="Kelley D.R."/>
            <person name="Schatz M.C."/>
            <person name="Puiu D."/>
            <person name="Hanrahan F."/>
            <person name="Pertea G."/>
            <person name="Van Tassell C.P."/>
            <person name="Sonstegard T.S."/>
            <person name="Marcais G."/>
            <person name="Roberts M."/>
            <person name="Subramanian P."/>
            <person name="Yorke J.A."/>
            <person name="Salzberg S.L."/>
        </authorList>
    </citation>
    <scope>NUCLEOTIDE SEQUENCE [LARGE SCALE GENOMIC DNA]</scope>
    <source>
        <strain>Hereford</strain>
    </source>
</reference>
<keyword id="KW-0256">Endoplasmic reticulum</keyword>
<keyword id="KW-0472">Membrane</keyword>
<keyword id="KW-0479">Metal-binding</keyword>
<keyword id="KW-1185">Reference proteome</keyword>
<keyword id="KW-0808">Transferase</keyword>
<keyword id="KW-0812">Transmembrane</keyword>
<keyword id="KW-1133">Transmembrane helix</keyword>
<keyword id="KW-0833">Ubl conjugation pathway</keyword>
<keyword id="KW-0862">Zinc</keyword>
<keyword id="KW-0863">Zinc-finger</keyword>
<gene>
    <name type="primary">RNF170</name>
</gene>
<evidence type="ECO:0000250" key="1">
    <source>
        <dbReference type="UniProtKB" id="Q96K19"/>
    </source>
</evidence>
<evidence type="ECO:0000255" key="2"/>
<evidence type="ECO:0000255" key="3">
    <source>
        <dbReference type="PROSITE-ProRule" id="PRU00175"/>
    </source>
</evidence>
<evidence type="ECO:0000305" key="4"/>
<protein>
    <recommendedName>
        <fullName>E3 ubiquitin-protein ligase RNF170</fullName>
        <ecNumber>2.3.2.27</ecNumber>
    </recommendedName>
    <alternativeName>
        <fullName>RING finger protein 170</fullName>
    </alternativeName>
    <alternativeName>
        <fullName evidence="4">RING-type E3 ubiquitin transferase RNF170</fullName>
    </alternativeName>
</protein>
<sequence>MAKYQGEVQSLKLDDDSVIEGVSDQVLVAVVVSLALIATLVYALFSRNAHQNIHPENQELVRVLREQLQTEQDAPAAARQQFYTDMYCPICLHQASLPVETNCGHLFCGTCIVAYWRYGSWLGAISCPICRQTVTLLLPVFGENDQSQDVVSLHQDISDYNRRFSGQPRSIMERIMDLPTLLRHAFREMFSVGGLFWMFRIRIILCLMGAFFYLISPLDFVPEALFGILGFLDDFFVIFLLLIYISIMYREVITQRLNR</sequence>
<proteinExistence type="inferred from homology"/>